<accession>O93229</accession>
<organism>
    <name type="scientific">Rana japonica</name>
    <name type="common">Japanese reddish frog</name>
    <dbReference type="NCBI Taxonomy" id="8402"/>
    <lineage>
        <taxon>Eukaryota</taxon>
        <taxon>Metazoa</taxon>
        <taxon>Chordata</taxon>
        <taxon>Craniata</taxon>
        <taxon>Vertebrata</taxon>
        <taxon>Euteleostomi</taxon>
        <taxon>Amphibia</taxon>
        <taxon>Batrachia</taxon>
        <taxon>Anura</taxon>
        <taxon>Neobatrachia</taxon>
        <taxon>Ranoidea</taxon>
        <taxon>Ranidae</taxon>
        <taxon>Rana</taxon>
        <taxon>Rana</taxon>
    </lineage>
</organism>
<feature type="chain" id="PRO_0000080370" description="G2/mitotic-specific cyclin-B2">
    <location>
        <begin position="1"/>
        <end position="392"/>
    </location>
</feature>
<name>CCNB2_RANJA</name>
<gene>
    <name type="primary">CCNB2</name>
</gene>
<comment type="function">
    <text>Essential for the control of the cell cycle at the G2/M (mitosis) transition.</text>
</comment>
<comment type="subunit">
    <text>Interacts with the CDK1 protein kinase to form a serine/threonine kinase holoenzyme complex also known as maturation promoting factor (MPF). The cyclin subunit imparts substrate specificity to the complex.</text>
</comment>
<comment type="developmental stage">
    <text>Accumulates steadily during G2 and is abruptly destroyed at mitosis.</text>
</comment>
<comment type="similarity">
    <text evidence="1">Belongs to the cyclin family. Cyclin AB subfamily.</text>
</comment>
<proteinExistence type="evidence at transcript level"/>
<evidence type="ECO:0000305" key="1"/>
<keyword id="KW-0131">Cell cycle</keyword>
<keyword id="KW-0132">Cell division</keyword>
<keyword id="KW-0195">Cyclin</keyword>
<keyword id="KW-0498">Mitosis</keyword>
<protein>
    <recommendedName>
        <fullName>G2/mitotic-specific cyclin-B2</fullName>
    </recommendedName>
</protein>
<reference key="1">
    <citation type="journal article" date="1998" name="Mol. Reprod. Dev.">
        <title>Either cyclin B1 or B2 is necessary and sufficient for inducing germinal vesicle breakdown during frog (Rana japonica) oocyte maturation.</title>
        <authorList>
            <person name="Ihara J."/>
            <person name="Yoshida N."/>
            <person name="Tanaka T."/>
            <person name="Mita K."/>
            <person name="Yamashita M."/>
        </authorList>
    </citation>
    <scope>NUCLEOTIDE SEQUENCE [MRNA]</scope>
    <source>
        <tissue>Ovary</tissue>
    </source>
</reference>
<sequence>MATRRAAIAREVDNAVGAMRSKAQLNGRRAALGEIGNKVTVRAVKQPAKNSNTTSKTTRPVAKVSNVSVKPKAVTVTEAPSQVKEASPVPMDVSMKEEEELCQAFSEVLNHVVDIDAEDGGNPQLCSEYVVDIYNYLREREVQQSIKQRYLDGMEINERMRAILVDWLIQVNSRFQFLQETLYMGIAIMDRFLQVQPISRGKLQLVGVTSLLLASKYEEMYSPEVADFAYITDNAYTTSQIREMEMIILRELKFDLGRPLPLHFLRRASKACSADAEQHTLAKYLMELTLVDYEMVHFHPSEIAAAALCLAQKVLGVGSWGSTQHHYTGYTEEDLTPIIKHIAKNVTKVNQNRTKHVAVRNKYASSKLMKISTHPQLMSLVITELAASLTSQ</sequence>
<dbReference type="EMBL" id="AB005253">
    <property type="protein sequence ID" value="BAA32563.1"/>
    <property type="molecule type" value="mRNA"/>
</dbReference>
<dbReference type="SMR" id="O93229"/>
<dbReference type="GO" id="GO:0016538">
    <property type="term" value="F:cyclin-dependent protein serine/threonine kinase regulator activity"/>
    <property type="evidence" value="ECO:0007669"/>
    <property type="project" value="InterPro"/>
</dbReference>
<dbReference type="GO" id="GO:0051301">
    <property type="term" value="P:cell division"/>
    <property type="evidence" value="ECO:0007669"/>
    <property type="project" value="UniProtKB-KW"/>
</dbReference>
<dbReference type="GO" id="GO:0044772">
    <property type="term" value="P:mitotic cell cycle phase transition"/>
    <property type="evidence" value="ECO:0007669"/>
    <property type="project" value="InterPro"/>
</dbReference>
<dbReference type="CDD" id="cd20570">
    <property type="entry name" value="CYCLIN_CCNB2_rpt2"/>
    <property type="match status" value="1"/>
</dbReference>
<dbReference type="FunFam" id="1.10.472.10:FF:000027">
    <property type="entry name" value="G2/mitotic-specific cyclin-B1"/>
    <property type="match status" value="1"/>
</dbReference>
<dbReference type="Gene3D" id="1.10.472.10">
    <property type="entry name" value="Cyclin-like"/>
    <property type="match status" value="2"/>
</dbReference>
<dbReference type="InterPro" id="IPR039361">
    <property type="entry name" value="Cyclin"/>
</dbReference>
<dbReference type="InterPro" id="IPR013763">
    <property type="entry name" value="Cyclin-like_dom"/>
</dbReference>
<dbReference type="InterPro" id="IPR036915">
    <property type="entry name" value="Cyclin-like_sf"/>
</dbReference>
<dbReference type="InterPro" id="IPR046965">
    <property type="entry name" value="Cyclin_A/B-like"/>
</dbReference>
<dbReference type="InterPro" id="IPR004367">
    <property type="entry name" value="Cyclin_C-dom"/>
</dbReference>
<dbReference type="InterPro" id="IPR006671">
    <property type="entry name" value="Cyclin_N"/>
</dbReference>
<dbReference type="InterPro" id="IPR048258">
    <property type="entry name" value="Cyclins_cyclin-box"/>
</dbReference>
<dbReference type="PANTHER" id="PTHR10177">
    <property type="entry name" value="CYCLINS"/>
    <property type="match status" value="1"/>
</dbReference>
<dbReference type="Pfam" id="PF02984">
    <property type="entry name" value="Cyclin_C"/>
    <property type="match status" value="1"/>
</dbReference>
<dbReference type="Pfam" id="PF00134">
    <property type="entry name" value="Cyclin_N"/>
    <property type="match status" value="1"/>
</dbReference>
<dbReference type="PIRSF" id="PIRSF001771">
    <property type="entry name" value="Cyclin_A_B_D_E"/>
    <property type="match status" value="1"/>
</dbReference>
<dbReference type="SMART" id="SM00385">
    <property type="entry name" value="CYCLIN"/>
    <property type="match status" value="2"/>
</dbReference>
<dbReference type="SMART" id="SM01332">
    <property type="entry name" value="Cyclin_C"/>
    <property type="match status" value="1"/>
</dbReference>
<dbReference type="SUPFAM" id="SSF47954">
    <property type="entry name" value="Cyclin-like"/>
    <property type="match status" value="2"/>
</dbReference>
<dbReference type="PROSITE" id="PS00292">
    <property type="entry name" value="CYCLINS"/>
    <property type="match status" value="1"/>
</dbReference>